<comment type="function">
    <text evidence="1">Catalyzes the complicated ring closure reaction between the two acyclic compounds 1-deoxy-D-xylulose-5-phosphate (DXP) and 3-amino-2-oxopropyl phosphate (1-amino-acetone-3-phosphate or AAP) to form pyridoxine 5'-phosphate (PNP) and inorganic phosphate.</text>
</comment>
<comment type="catalytic activity">
    <reaction evidence="1">
        <text>3-amino-2-oxopropyl phosphate + 1-deoxy-D-xylulose 5-phosphate = pyridoxine 5'-phosphate + phosphate + 2 H2O + H(+)</text>
        <dbReference type="Rhea" id="RHEA:15265"/>
        <dbReference type="ChEBI" id="CHEBI:15377"/>
        <dbReference type="ChEBI" id="CHEBI:15378"/>
        <dbReference type="ChEBI" id="CHEBI:43474"/>
        <dbReference type="ChEBI" id="CHEBI:57279"/>
        <dbReference type="ChEBI" id="CHEBI:57792"/>
        <dbReference type="ChEBI" id="CHEBI:58589"/>
        <dbReference type="EC" id="2.6.99.2"/>
    </reaction>
</comment>
<comment type="pathway">
    <text evidence="1">Cofactor biosynthesis; pyridoxine 5'-phosphate biosynthesis; pyridoxine 5'-phosphate from D-erythrose 4-phosphate: step 5/5.</text>
</comment>
<comment type="subunit">
    <text evidence="1">Homooctamer; tetramer of dimers.</text>
</comment>
<comment type="subcellular location">
    <subcellularLocation>
        <location evidence="1">Cytoplasm</location>
    </subcellularLocation>
</comment>
<comment type="similarity">
    <text evidence="1">Belongs to the PNP synthase family.</text>
</comment>
<sequence>MILLGVNIDHIATLRQARGERYPDPVDAAFAAERAGADSITVHLREDRRHIQDRDVVLLQQTCQTKINLEMAASEPMLTLAERWKPQDCCLVPEKRHELTTEGGLDVVGNRHRLADAVARLHDAGIRVSLFVDPDLEQISAAGAIGATVVEMHTGRYANAATQAQRNLELEQLYRAAHQASLNGLTVHAGHGLTYHNVQPIARLPDLKELNIGHAIIARAVMVGMESAVKEMKRLMREAVKTP</sequence>
<gene>
    <name evidence="1" type="primary">pdxJ</name>
    <name type="ordered locus">Mmc1_1860</name>
</gene>
<accession>A0L8S5</accession>
<dbReference type="EC" id="2.6.99.2" evidence="1"/>
<dbReference type="EMBL" id="CP000471">
    <property type="protein sequence ID" value="ABK44368.1"/>
    <property type="molecule type" value="Genomic_DNA"/>
</dbReference>
<dbReference type="RefSeq" id="WP_011713512.1">
    <property type="nucleotide sequence ID" value="NC_008576.1"/>
</dbReference>
<dbReference type="SMR" id="A0L8S5"/>
<dbReference type="STRING" id="156889.Mmc1_1860"/>
<dbReference type="KEGG" id="mgm:Mmc1_1860"/>
<dbReference type="eggNOG" id="COG0854">
    <property type="taxonomic scope" value="Bacteria"/>
</dbReference>
<dbReference type="HOGENOM" id="CLU_074563_0_0_5"/>
<dbReference type="OrthoDB" id="9806590at2"/>
<dbReference type="UniPathway" id="UPA00244">
    <property type="reaction ID" value="UER00313"/>
</dbReference>
<dbReference type="Proteomes" id="UP000002586">
    <property type="component" value="Chromosome"/>
</dbReference>
<dbReference type="GO" id="GO:0005829">
    <property type="term" value="C:cytosol"/>
    <property type="evidence" value="ECO:0007669"/>
    <property type="project" value="TreeGrafter"/>
</dbReference>
<dbReference type="GO" id="GO:0033856">
    <property type="term" value="F:pyridoxine 5'-phosphate synthase activity"/>
    <property type="evidence" value="ECO:0007669"/>
    <property type="project" value="UniProtKB-EC"/>
</dbReference>
<dbReference type="GO" id="GO:0008615">
    <property type="term" value="P:pyridoxine biosynthetic process"/>
    <property type="evidence" value="ECO:0007669"/>
    <property type="project" value="UniProtKB-UniRule"/>
</dbReference>
<dbReference type="CDD" id="cd00003">
    <property type="entry name" value="PNPsynthase"/>
    <property type="match status" value="1"/>
</dbReference>
<dbReference type="FunFam" id="3.20.20.70:FF:000042">
    <property type="entry name" value="Pyridoxine 5'-phosphate synthase"/>
    <property type="match status" value="1"/>
</dbReference>
<dbReference type="Gene3D" id="3.20.20.70">
    <property type="entry name" value="Aldolase class I"/>
    <property type="match status" value="1"/>
</dbReference>
<dbReference type="HAMAP" id="MF_00279">
    <property type="entry name" value="PdxJ"/>
    <property type="match status" value="1"/>
</dbReference>
<dbReference type="InterPro" id="IPR013785">
    <property type="entry name" value="Aldolase_TIM"/>
</dbReference>
<dbReference type="InterPro" id="IPR004569">
    <property type="entry name" value="PyrdxlP_synth_PdxJ"/>
</dbReference>
<dbReference type="InterPro" id="IPR036130">
    <property type="entry name" value="Pyridoxine-5'_phos_synth"/>
</dbReference>
<dbReference type="NCBIfam" id="TIGR00559">
    <property type="entry name" value="pdxJ"/>
    <property type="match status" value="1"/>
</dbReference>
<dbReference type="NCBIfam" id="NF003623">
    <property type="entry name" value="PRK05265.1-1"/>
    <property type="match status" value="1"/>
</dbReference>
<dbReference type="NCBIfam" id="NF003624">
    <property type="entry name" value="PRK05265.1-2"/>
    <property type="match status" value="1"/>
</dbReference>
<dbReference type="NCBIfam" id="NF003625">
    <property type="entry name" value="PRK05265.1-3"/>
    <property type="match status" value="1"/>
</dbReference>
<dbReference type="NCBIfam" id="NF003627">
    <property type="entry name" value="PRK05265.1-5"/>
    <property type="match status" value="1"/>
</dbReference>
<dbReference type="PANTHER" id="PTHR30456">
    <property type="entry name" value="PYRIDOXINE 5'-PHOSPHATE SYNTHASE"/>
    <property type="match status" value="1"/>
</dbReference>
<dbReference type="PANTHER" id="PTHR30456:SF0">
    <property type="entry name" value="PYRIDOXINE 5'-PHOSPHATE SYNTHASE"/>
    <property type="match status" value="1"/>
</dbReference>
<dbReference type="Pfam" id="PF03740">
    <property type="entry name" value="PdxJ"/>
    <property type="match status" value="1"/>
</dbReference>
<dbReference type="SUPFAM" id="SSF63892">
    <property type="entry name" value="Pyridoxine 5'-phosphate synthase"/>
    <property type="match status" value="1"/>
</dbReference>
<protein>
    <recommendedName>
        <fullName evidence="1">Pyridoxine 5'-phosphate synthase</fullName>
        <shortName evidence="1">PNP synthase</shortName>
        <ecNumber evidence="1">2.6.99.2</ecNumber>
    </recommendedName>
</protein>
<feature type="chain" id="PRO_1000022378" description="Pyridoxine 5'-phosphate synthase">
    <location>
        <begin position="1"/>
        <end position="243"/>
    </location>
</feature>
<feature type="active site" description="Proton acceptor" evidence="1">
    <location>
        <position position="43"/>
    </location>
</feature>
<feature type="active site" description="Proton acceptor" evidence="1">
    <location>
        <position position="70"/>
    </location>
</feature>
<feature type="active site" description="Proton donor" evidence="1">
    <location>
        <position position="191"/>
    </location>
</feature>
<feature type="binding site" evidence="1">
    <location>
        <position position="7"/>
    </location>
    <ligand>
        <name>3-amino-2-oxopropyl phosphate</name>
        <dbReference type="ChEBI" id="CHEBI:57279"/>
    </ligand>
</feature>
<feature type="binding site" evidence="1">
    <location>
        <begin position="9"/>
        <end position="10"/>
    </location>
    <ligand>
        <name>1-deoxy-D-xylulose 5-phosphate</name>
        <dbReference type="ChEBI" id="CHEBI:57792"/>
    </ligand>
</feature>
<feature type="binding site" evidence="1">
    <location>
        <position position="18"/>
    </location>
    <ligand>
        <name>3-amino-2-oxopropyl phosphate</name>
        <dbReference type="ChEBI" id="CHEBI:57279"/>
    </ligand>
</feature>
<feature type="binding site" evidence="1">
    <location>
        <position position="45"/>
    </location>
    <ligand>
        <name>1-deoxy-D-xylulose 5-phosphate</name>
        <dbReference type="ChEBI" id="CHEBI:57792"/>
    </ligand>
</feature>
<feature type="binding site" evidence="1">
    <location>
        <position position="50"/>
    </location>
    <ligand>
        <name>1-deoxy-D-xylulose 5-phosphate</name>
        <dbReference type="ChEBI" id="CHEBI:57792"/>
    </ligand>
</feature>
<feature type="binding site" evidence="1">
    <location>
        <position position="100"/>
    </location>
    <ligand>
        <name>1-deoxy-D-xylulose 5-phosphate</name>
        <dbReference type="ChEBI" id="CHEBI:57792"/>
    </ligand>
</feature>
<feature type="binding site" evidence="1">
    <location>
        <position position="192"/>
    </location>
    <ligand>
        <name>3-amino-2-oxopropyl phosphate</name>
        <dbReference type="ChEBI" id="CHEBI:57279"/>
    </ligand>
</feature>
<feature type="binding site" evidence="1">
    <location>
        <begin position="213"/>
        <end position="214"/>
    </location>
    <ligand>
        <name>3-amino-2-oxopropyl phosphate</name>
        <dbReference type="ChEBI" id="CHEBI:57279"/>
    </ligand>
</feature>
<feature type="site" description="Transition state stabilizer" evidence="1">
    <location>
        <position position="151"/>
    </location>
</feature>
<keyword id="KW-0963">Cytoplasm</keyword>
<keyword id="KW-0664">Pyridoxine biosynthesis</keyword>
<keyword id="KW-1185">Reference proteome</keyword>
<keyword id="KW-0808">Transferase</keyword>
<evidence type="ECO:0000255" key="1">
    <source>
        <dbReference type="HAMAP-Rule" id="MF_00279"/>
    </source>
</evidence>
<organism>
    <name type="scientific">Magnetococcus marinus (strain ATCC BAA-1437 / JCM 17883 / MC-1)</name>
    <dbReference type="NCBI Taxonomy" id="156889"/>
    <lineage>
        <taxon>Bacteria</taxon>
        <taxon>Pseudomonadati</taxon>
        <taxon>Pseudomonadota</taxon>
        <taxon>Alphaproteobacteria</taxon>
        <taxon>Magnetococcales</taxon>
        <taxon>Magnetococcaceae</taxon>
        <taxon>Magnetococcus</taxon>
    </lineage>
</organism>
<reference key="1">
    <citation type="journal article" date="2009" name="Appl. Environ. Microbiol.">
        <title>Complete genome sequence of the chemolithoautotrophic marine magnetotactic coccus strain MC-1.</title>
        <authorList>
            <person name="Schubbe S."/>
            <person name="Williams T.J."/>
            <person name="Xie G."/>
            <person name="Kiss H.E."/>
            <person name="Brettin T.S."/>
            <person name="Martinez D."/>
            <person name="Ross C.A."/>
            <person name="Schuler D."/>
            <person name="Cox B.L."/>
            <person name="Nealson K.H."/>
            <person name="Bazylinski D.A."/>
        </authorList>
    </citation>
    <scope>NUCLEOTIDE SEQUENCE [LARGE SCALE GENOMIC DNA]</scope>
    <source>
        <strain>ATCC BAA-1437 / JCM 17883 / MC-1</strain>
    </source>
</reference>
<proteinExistence type="inferred from homology"/>
<name>PDXJ_MAGMM</name>